<dbReference type="EC" id="7.4.2.8" evidence="1"/>
<dbReference type="EMBL" id="CP000781">
    <property type="protein sequence ID" value="ABS65770.1"/>
    <property type="molecule type" value="Genomic_DNA"/>
</dbReference>
<dbReference type="SMR" id="A7ICM7"/>
<dbReference type="STRING" id="78245.Xaut_0512"/>
<dbReference type="KEGG" id="xau:Xaut_0512"/>
<dbReference type="eggNOG" id="COG0653">
    <property type="taxonomic scope" value="Bacteria"/>
</dbReference>
<dbReference type="HOGENOM" id="CLU_005314_3_0_5"/>
<dbReference type="OrthoDB" id="9805579at2"/>
<dbReference type="PhylomeDB" id="A7ICM7"/>
<dbReference type="Proteomes" id="UP000002417">
    <property type="component" value="Chromosome"/>
</dbReference>
<dbReference type="GO" id="GO:0031522">
    <property type="term" value="C:cell envelope Sec protein transport complex"/>
    <property type="evidence" value="ECO:0007669"/>
    <property type="project" value="TreeGrafter"/>
</dbReference>
<dbReference type="GO" id="GO:0005829">
    <property type="term" value="C:cytosol"/>
    <property type="evidence" value="ECO:0007669"/>
    <property type="project" value="TreeGrafter"/>
</dbReference>
<dbReference type="GO" id="GO:0005886">
    <property type="term" value="C:plasma membrane"/>
    <property type="evidence" value="ECO:0007669"/>
    <property type="project" value="UniProtKB-SubCell"/>
</dbReference>
<dbReference type="GO" id="GO:0005524">
    <property type="term" value="F:ATP binding"/>
    <property type="evidence" value="ECO:0007669"/>
    <property type="project" value="UniProtKB-UniRule"/>
</dbReference>
<dbReference type="GO" id="GO:0046872">
    <property type="term" value="F:metal ion binding"/>
    <property type="evidence" value="ECO:0007669"/>
    <property type="project" value="UniProtKB-KW"/>
</dbReference>
<dbReference type="GO" id="GO:0008564">
    <property type="term" value="F:protein-exporting ATPase activity"/>
    <property type="evidence" value="ECO:0007669"/>
    <property type="project" value="UniProtKB-EC"/>
</dbReference>
<dbReference type="GO" id="GO:0065002">
    <property type="term" value="P:intracellular protein transmembrane transport"/>
    <property type="evidence" value="ECO:0007669"/>
    <property type="project" value="UniProtKB-UniRule"/>
</dbReference>
<dbReference type="GO" id="GO:0017038">
    <property type="term" value="P:protein import"/>
    <property type="evidence" value="ECO:0007669"/>
    <property type="project" value="InterPro"/>
</dbReference>
<dbReference type="GO" id="GO:0006605">
    <property type="term" value="P:protein targeting"/>
    <property type="evidence" value="ECO:0007669"/>
    <property type="project" value="UniProtKB-UniRule"/>
</dbReference>
<dbReference type="GO" id="GO:0043952">
    <property type="term" value="P:protein transport by the Sec complex"/>
    <property type="evidence" value="ECO:0007669"/>
    <property type="project" value="TreeGrafter"/>
</dbReference>
<dbReference type="CDD" id="cd17928">
    <property type="entry name" value="DEXDc_SecA"/>
    <property type="match status" value="1"/>
</dbReference>
<dbReference type="CDD" id="cd18803">
    <property type="entry name" value="SF2_C_secA"/>
    <property type="match status" value="1"/>
</dbReference>
<dbReference type="FunFam" id="3.90.1440.10:FF:000001">
    <property type="entry name" value="Preprotein translocase subunit SecA"/>
    <property type="match status" value="1"/>
</dbReference>
<dbReference type="FunFam" id="1.10.3060.10:FF:000003">
    <property type="entry name" value="Protein translocase subunit SecA"/>
    <property type="match status" value="1"/>
</dbReference>
<dbReference type="FunFam" id="3.40.50.300:FF:000334">
    <property type="entry name" value="Protein translocase subunit SecA"/>
    <property type="match status" value="1"/>
</dbReference>
<dbReference type="FunFam" id="3.40.50.300:FF:001790">
    <property type="entry name" value="Protein translocase subunit SecA"/>
    <property type="match status" value="1"/>
</dbReference>
<dbReference type="Gene3D" id="1.10.3060.10">
    <property type="entry name" value="Helical scaffold and wing domains of SecA"/>
    <property type="match status" value="1"/>
</dbReference>
<dbReference type="Gene3D" id="3.40.50.300">
    <property type="entry name" value="P-loop containing nucleotide triphosphate hydrolases"/>
    <property type="match status" value="2"/>
</dbReference>
<dbReference type="Gene3D" id="3.90.1440.10">
    <property type="entry name" value="SecA, preprotein cross-linking domain"/>
    <property type="match status" value="1"/>
</dbReference>
<dbReference type="HAMAP" id="MF_01382">
    <property type="entry name" value="SecA"/>
    <property type="match status" value="1"/>
</dbReference>
<dbReference type="InterPro" id="IPR014001">
    <property type="entry name" value="Helicase_ATP-bd"/>
</dbReference>
<dbReference type="InterPro" id="IPR027417">
    <property type="entry name" value="P-loop_NTPase"/>
</dbReference>
<dbReference type="InterPro" id="IPR004027">
    <property type="entry name" value="SEC_C_motif"/>
</dbReference>
<dbReference type="InterPro" id="IPR000185">
    <property type="entry name" value="SecA"/>
</dbReference>
<dbReference type="InterPro" id="IPR020937">
    <property type="entry name" value="SecA_CS"/>
</dbReference>
<dbReference type="InterPro" id="IPR011115">
    <property type="entry name" value="SecA_DEAD"/>
</dbReference>
<dbReference type="InterPro" id="IPR014018">
    <property type="entry name" value="SecA_motor_DEAD"/>
</dbReference>
<dbReference type="InterPro" id="IPR011130">
    <property type="entry name" value="SecA_preprotein_X-link_dom"/>
</dbReference>
<dbReference type="InterPro" id="IPR044722">
    <property type="entry name" value="SecA_SF2_C"/>
</dbReference>
<dbReference type="InterPro" id="IPR011116">
    <property type="entry name" value="SecA_Wing/Scaffold"/>
</dbReference>
<dbReference type="InterPro" id="IPR036266">
    <property type="entry name" value="SecA_Wing/Scaffold_sf"/>
</dbReference>
<dbReference type="InterPro" id="IPR036670">
    <property type="entry name" value="SecA_X-link_sf"/>
</dbReference>
<dbReference type="NCBIfam" id="NF009538">
    <property type="entry name" value="PRK12904.1"/>
    <property type="match status" value="1"/>
</dbReference>
<dbReference type="NCBIfam" id="TIGR00963">
    <property type="entry name" value="secA"/>
    <property type="match status" value="1"/>
</dbReference>
<dbReference type="PANTHER" id="PTHR30612:SF0">
    <property type="entry name" value="CHLOROPLAST PROTEIN-TRANSPORTING ATPASE"/>
    <property type="match status" value="1"/>
</dbReference>
<dbReference type="PANTHER" id="PTHR30612">
    <property type="entry name" value="SECA INNER MEMBRANE COMPONENT OF SEC PROTEIN SECRETION SYSTEM"/>
    <property type="match status" value="1"/>
</dbReference>
<dbReference type="Pfam" id="PF21090">
    <property type="entry name" value="P-loop_SecA"/>
    <property type="match status" value="1"/>
</dbReference>
<dbReference type="Pfam" id="PF02810">
    <property type="entry name" value="SEC-C"/>
    <property type="match status" value="1"/>
</dbReference>
<dbReference type="Pfam" id="PF07517">
    <property type="entry name" value="SecA_DEAD"/>
    <property type="match status" value="1"/>
</dbReference>
<dbReference type="Pfam" id="PF01043">
    <property type="entry name" value="SecA_PP_bind"/>
    <property type="match status" value="1"/>
</dbReference>
<dbReference type="Pfam" id="PF07516">
    <property type="entry name" value="SecA_SW"/>
    <property type="match status" value="1"/>
</dbReference>
<dbReference type="PRINTS" id="PR00906">
    <property type="entry name" value="SECA"/>
</dbReference>
<dbReference type="SMART" id="SM00957">
    <property type="entry name" value="SecA_DEAD"/>
    <property type="match status" value="1"/>
</dbReference>
<dbReference type="SMART" id="SM00958">
    <property type="entry name" value="SecA_PP_bind"/>
    <property type="match status" value="1"/>
</dbReference>
<dbReference type="SUPFAM" id="SSF81886">
    <property type="entry name" value="Helical scaffold and wing domains of SecA"/>
    <property type="match status" value="1"/>
</dbReference>
<dbReference type="SUPFAM" id="SSF52540">
    <property type="entry name" value="P-loop containing nucleoside triphosphate hydrolases"/>
    <property type="match status" value="2"/>
</dbReference>
<dbReference type="SUPFAM" id="SSF81767">
    <property type="entry name" value="Pre-protein crosslinking domain of SecA"/>
    <property type="match status" value="1"/>
</dbReference>
<dbReference type="PROSITE" id="PS01312">
    <property type="entry name" value="SECA"/>
    <property type="match status" value="1"/>
</dbReference>
<dbReference type="PROSITE" id="PS51196">
    <property type="entry name" value="SECA_MOTOR_DEAD"/>
    <property type="match status" value="1"/>
</dbReference>
<protein>
    <recommendedName>
        <fullName evidence="1">Protein translocase subunit SecA</fullName>
        <ecNumber evidence="1">7.4.2.8</ecNumber>
    </recommendedName>
</protein>
<accession>A7ICM7</accession>
<comment type="function">
    <text evidence="1">Part of the Sec protein translocase complex. Interacts with the SecYEG preprotein conducting channel. Has a central role in coupling the hydrolysis of ATP to the transfer of proteins into and across the cell membrane, serving both as a receptor for the preprotein-SecB complex and as an ATP-driven molecular motor driving the stepwise translocation of polypeptide chains across the membrane.</text>
</comment>
<comment type="catalytic activity">
    <reaction evidence="1">
        <text>ATP + H2O + cellular proteinSide 1 = ADP + phosphate + cellular proteinSide 2.</text>
        <dbReference type="EC" id="7.4.2.8"/>
    </reaction>
</comment>
<comment type="cofactor">
    <cofactor evidence="1">
        <name>Zn(2+)</name>
        <dbReference type="ChEBI" id="CHEBI:29105"/>
    </cofactor>
    <text evidence="1">May bind 1 zinc ion per subunit.</text>
</comment>
<comment type="subunit">
    <text evidence="1">Monomer and homodimer. Part of the essential Sec protein translocation apparatus which comprises SecA, SecYEG and auxiliary proteins SecDF-YajC and YidC.</text>
</comment>
<comment type="subcellular location">
    <subcellularLocation>
        <location evidence="1">Cell inner membrane</location>
        <topology evidence="1">Peripheral membrane protein</topology>
        <orientation evidence="1">Cytoplasmic side</orientation>
    </subcellularLocation>
    <subcellularLocation>
        <location evidence="1">Cytoplasm</location>
    </subcellularLocation>
    <text evidence="1">Distribution is 50-50.</text>
</comment>
<comment type="similarity">
    <text evidence="1">Belongs to the SecA family.</text>
</comment>
<gene>
    <name evidence="1" type="primary">secA</name>
    <name type="ordered locus">Xaut_0512</name>
</gene>
<keyword id="KW-0067">ATP-binding</keyword>
<keyword id="KW-0997">Cell inner membrane</keyword>
<keyword id="KW-1003">Cell membrane</keyword>
<keyword id="KW-0963">Cytoplasm</keyword>
<keyword id="KW-0472">Membrane</keyword>
<keyword id="KW-0479">Metal-binding</keyword>
<keyword id="KW-0547">Nucleotide-binding</keyword>
<keyword id="KW-0653">Protein transport</keyword>
<keyword id="KW-1185">Reference proteome</keyword>
<keyword id="KW-1278">Translocase</keyword>
<keyword id="KW-0811">Translocation</keyword>
<keyword id="KW-0813">Transport</keyword>
<keyword id="KW-0862">Zinc</keyword>
<name>SECA_XANP2</name>
<reference key="1">
    <citation type="submission" date="2007-07" db="EMBL/GenBank/DDBJ databases">
        <title>Complete sequence of chromosome of Xanthobacter autotrophicus Py2.</title>
        <authorList>
            <consortium name="US DOE Joint Genome Institute"/>
            <person name="Copeland A."/>
            <person name="Lucas S."/>
            <person name="Lapidus A."/>
            <person name="Barry K."/>
            <person name="Glavina del Rio T."/>
            <person name="Hammon N."/>
            <person name="Israni S."/>
            <person name="Dalin E."/>
            <person name="Tice H."/>
            <person name="Pitluck S."/>
            <person name="Sims D."/>
            <person name="Brettin T."/>
            <person name="Bruce D."/>
            <person name="Detter J.C."/>
            <person name="Han C."/>
            <person name="Tapia R."/>
            <person name="Brainard J."/>
            <person name="Schmutz J."/>
            <person name="Larimer F."/>
            <person name="Land M."/>
            <person name="Hauser L."/>
            <person name="Kyrpides N."/>
            <person name="Kim E."/>
            <person name="Ensigns S.A."/>
            <person name="Richardson P."/>
        </authorList>
    </citation>
    <scope>NUCLEOTIDE SEQUENCE [LARGE SCALE GENOMIC DNA]</scope>
    <source>
        <strain>ATCC BAA-1158 / Py2</strain>
    </source>
</reference>
<proteinExistence type="inferred from homology"/>
<evidence type="ECO:0000255" key="1">
    <source>
        <dbReference type="HAMAP-Rule" id="MF_01382"/>
    </source>
</evidence>
<organism>
    <name type="scientific">Xanthobacter autotrophicus (strain ATCC BAA-1158 / Py2)</name>
    <dbReference type="NCBI Taxonomy" id="78245"/>
    <lineage>
        <taxon>Bacteria</taxon>
        <taxon>Pseudomonadati</taxon>
        <taxon>Pseudomonadota</taxon>
        <taxon>Alphaproteobacteria</taxon>
        <taxon>Hyphomicrobiales</taxon>
        <taxon>Xanthobacteraceae</taxon>
        <taxon>Xanthobacter</taxon>
    </lineage>
</organism>
<feature type="chain" id="PRO_1000145078" description="Protein translocase subunit SecA">
    <location>
        <begin position="1"/>
        <end position="931"/>
    </location>
</feature>
<feature type="binding site" evidence="1">
    <location>
        <position position="87"/>
    </location>
    <ligand>
        <name>ATP</name>
        <dbReference type="ChEBI" id="CHEBI:30616"/>
    </ligand>
</feature>
<feature type="binding site" evidence="1">
    <location>
        <begin position="105"/>
        <end position="109"/>
    </location>
    <ligand>
        <name>ATP</name>
        <dbReference type="ChEBI" id="CHEBI:30616"/>
    </ligand>
</feature>
<feature type="binding site" evidence="1">
    <location>
        <position position="523"/>
    </location>
    <ligand>
        <name>ATP</name>
        <dbReference type="ChEBI" id="CHEBI:30616"/>
    </ligand>
</feature>
<feature type="binding site" evidence="1">
    <location>
        <position position="915"/>
    </location>
    <ligand>
        <name>Zn(2+)</name>
        <dbReference type="ChEBI" id="CHEBI:29105"/>
    </ligand>
</feature>
<feature type="binding site" evidence="1">
    <location>
        <position position="917"/>
    </location>
    <ligand>
        <name>Zn(2+)</name>
        <dbReference type="ChEBI" id="CHEBI:29105"/>
    </ligand>
</feature>
<feature type="binding site" evidence="1">
    <location>
        <position position="926"/>
    </location>
    <ligand>
        <name>Zn(2+)</name>
        <dbReference type="ChEBI" id="CHEBI:29105"/>
    </ligand>
</feature>
<feature type="binding site" evidence="1">
    <location>
        <position position="927"/>
    </location>
    <ligand>
        <name>Zn(2+)</name>
        <dbReference type="ChEBI" id="CHEBI:29105"/>
    </ligand>
</feature>
<sequence length="931" mass="104677">MLGGLARKLFGSANDRRVKGYRPRVQAINALEPELEALSDEALRARTEDFRRQLAEGKTLDDLLVPAFATVREGAKRALGMRPFDVQLIGGMVMHEAGIAEMKTGEGKTLVATLPVYLNALAGKGVHVVTVNDYLAKRDAEWMGRLYRFLGLTTGIIVHGLDDDERRVAYASDVTYATNNELGFDYLRDNMKYERGQMVQRPHFYAIVDEVDSILIDEARTPLIISGPLDDRSDFYNTIDTYIPRLGKEDYEVDEKQRSVSMTEAGMEKMEQMLSAAGVLKSASLYDIENVSVVHHVNQALRAHTLFQRDKDYIVRNDEVVIIDEFTGRMMPGRRYSEGLHQALEAKERVQVQPENQTLASITFQNYFRLYEKLSGMTGTANTEAAEFADIYKLEVVEIPTNVQISRIDDDDEVYRTAGEKYAAIIELIKECAERSQPVLVGTTSIEKSELLAELLKQAGFRQKDFSDPTAFNGRELLINDRSGKSFAVLNARYHEQEAYIVSQAGVPGAITIATNMAGRGTDIKLGGSADMRIEIELKDLPEGAERAAAEAKIRAEVEELKQKALEAGGLYVLGTERHESRRIDNQLRGRSGRQGDPGHSKFFLSLDDDLMRIFGSDRLDGMLQRLGLKEGEAIIHPWINKALEKAQQKVEARNYDMRKNVLKYDDVLNDQRKVVFEQRVELMNDEDVAETVEDMRHALITETVAKFIPENAYPEQWDVDGLDTALKEMLALDLPVKDWAKEEGIAGPEVTERIIRRADELMAAKTAQYGPDIMRYVEKSILLQTLDHLWREHIGMLDHLRQVVGLRGYAQRDPLNEYKSEAFNLFSALLNRLREVVTAQLMRVEIVTQQPPPEELPPMEAHHADPFTGEDELAFAGAALGSRPQPLLSGDLAVAERDPNDPESWGKVGRNEACPCGSGKKYKHCHGRFA</sequence>